<protein>
    <recommendedName>
        <fullName>Nif-specific regulatory protein</fullName>
    </recommendedName>
</protein>
<sequence length="524" mass="58650">MIHKSDSDTTVRRFDLSQQFTAMQRISVVLSRATEASKTLQEVLSVLHNDAFMQHGMICLYDSQQEILSIEALQQTENQTLPGSTQIRYRPGEGLVGTVLAQGQSLVLPRVADDQRFLDRLSLYDYDLPFIAVPLMGPHSRPIGVLAAQPMARQEERLPACTRFLETVANLIAQTIRLMILPTSAAQPPQQSPRVERPRACTSSRGFGLENMVGKSPAMRQIMDIIRQVSRWDTTVLVRGESGTGKELIANAIHHNSPRAAAAFVKFNCAALPDNLLESELFGHEKGAFTGAVRQRKGRFELADGGTLFLDEIGESSASFQAKLLRILQEGEMERVGGDETLRVNVRIIAATNRHLEEEVRLGHFREDLYYRLNVMPIALPPLRERQEDIAELAHFLVRKIAHSQGRTLRISDGAIRLLMEYSWPGNVRELENCLERSAVLSESGLIDRDVILFNHRDNPPKALASSGPAEDGWLDNSLDERQRLIAALEKAGWVQAKAARLLGMTPRQVAYRIQIMDITMPRL</sequence>
<proteinExistence type="inferred from homology"/>
<comment type="function">
    <text evidence="1">Required for activation of most nif operons, which are directly involved in nitrogen fixation.</text>
</comment>
<comment type="subunit">
    <text evidence="1">Interacts with sigma-54.</text>
</comment>
<feature type="chain" id="PRO_0000081308" description="Nif-specific regulatory protein">
    <location>
        <begin position="1"/>
        <end position="524"/>
    </location>
</feature>
<feature type="domain" description="GAF">
    <location>
        <begin position="35"/>
        <end position="176"/>
    </location>
</feature>
<feature type="domain" description="Sigma-54 factor interaction" evidence="2">
    <location>
        <begin position="212"/>
        <end position="481"/>
    </location>
</feature>
<feature type="DNA-binding region" description="H-T-H motif" evidence="1">
    <location>
        <begin position="496"/>
        <end position="515"/>
    </location>
</feature>
<feature type="region of interest" description="A domain">
    <location>
        <begin position="1"/>
        <end position="182"/>
    </location>
</feature>
<feature type="region of interest" description="C-terminal DNA-binding domain">
    <location>
        <begin position="482"/>
        <end position="524"/>
    </location>
</feature>
<feature type="binding site" evidence="2">
    <location>
        <begin position="240"/>
        <end position="247"/>
    </location>
    <ligand>
        <name>ATP</name>
        <dbReference type="ChEBI" id="CHEBI:30616"/>
    </ligand>
</feature>
<feature type="binding site" evidence="2">
    <location>
        <begin position="303"/>
        <end position="312"/>
    </location>
    <ligand>
        <name>ATP</name>
        <dbReference type="ChEBI" id="CHEBI:30616"/>
    </ligand>
</feature>
<accession>P56266</accession>
<name>NIFA_KLEOX</name>
<dbReference type="EMBL" id="D00339">
    <property type="protein sequence ID" value="BAA00245.1"/>
    <property type="molecule type" value="Genomic_DNA"/>
</dbReference>
<dbReference type="SMR" id="P56266"/>
<dbReference type="STRING" id="571.AB185_16955"/>
<dbReference type="eggNOG" id="COG3604">
    <property type="taxonomic scope" value="Bacteria"/>
</dbReference>
<dbReference type="GO" id="GO:0005524">
    <property type="term" value="F:ATP binding"/>
    <property type="evidence" value="ECO:0007669"/>
    <property type="project" value="UniProtKB-KW"/>
</dbReference>
<dbReference type="GO" id="GO:0016887">
    <property type="term" value="F:ATP hydrolysis activity"/>
    <property type="evidence" value="ECO:0007669"/>
    <property type="project" value="InterPro"/>
</dbReference>
<dbReference type="GO" id="GO:0003700">
    <property type="term" value="F:DNA-binding transcription factor activity"/>
    <property type="evidence" value="ECO:0007669"/>
    <property type="project" value="InterPro"/>
</dbReference>
<dbReference type="GO" id="GO:0043565">
    <property type="term" value="F:sequence-specific DNA binding"/>
    <property type="evidence" value="ECO:0007669"/>
    <property type="project" value="InterPro"/>
</dbReference>
<dbReference type="GO" id="GO:0009399">
    <property type="term" value="P:nitrogen fixation"/>
    <property type="evidence" value="ECO:0007669"/>
    <property type="project" value="UniProtKB-KW"/>
</dbReference>
<dbReference type="GO" id="GO:0000160">
    <property type="term" value="P:phosphorelay signal transduction system"/>
    <property type="evidence" value="ECO:0007669"/>
    <property type="project" value="UniProtKB-KW"/>
</dbReference>
<dbReference type="CDD" id="cd00009">
    <property type="entry name" value="AAA"/>
    <property type="match status" value="1"/>
</dbReference>
<dbReference type="FunFam" id="3.40.50.300:FF:000006">
    <property type="entry name" value="DNA-binding transcriptional regulator NtrC"/>
    <property type="match status" value="1"/>
</dbReference>
<dbReference type="Gene3D" id="1.10.8.60">
    <property type="match status" value="1"/>
</dbReference>
<dbReference type="Gene3D" id="3.30.450.40">
    <property type="match status" value="1"/>
</dbReference>
<dbReference type="Gene3D" id="1.10.10.60">
    <property type="entry name" value="Homeodomain-like"/>
    <property type="match status" value="1"/>
</dbReference>
<dbReference type="Gene3D" id="3.40.50.300">
    <property type="entry name" value="P-loop containing nucleotide triphosphate hydrolases"/>
    <property type="match status" value="1"/>
</dbReference>
<dbReference type="InterPro" id="IPR003593">
    <property type="entry name" value="AAA+_ATPase"/>
</dbReference>
<dbReference type="InterPro" id="IPR003018">
    <property type="entry name" value="GAF"/>
</dbReference>
<dbReference type="InterPro" id="IPR029016">
    <property type="entry name" value="GAF-like_dom_sf"/>
</dbReference>
<dbReference type="InterPro" id="IPR009057">
    <property type="entry name" value="Homeodomain-like_sf"/>
</dbReference>
<dbReference type="InterPro" id="IPR002197">
    <property type="entry name" value="HTH_Fis"/>
</dbReference>
<dbReference type="InterPro" id="IPR010113">
    <property type="entry name" value="Nif-specific_regulatory_prot"/>
</dbReference>
<dbReference type="InterPro" id="IPR027417">
    <property type="entry name" value="P-loop_NTPase"/>
</dbReference>
<dbReference type="InterPro" id="IPR002078">
    <property type="entry name" value="Sigma_54_int"/>
</dbReference>
<dbReference type="InterPro" id="IPR025662">
    <property type="entry name" value="Sigma_54_int_dom_ATP-bd_1"/>
</dbReference>
<dbReference type="InterPro" id="IPR025943">
    <property type="entry name" value="Sigma_54_int_dom_ATP-bd_2"/>
</dbReference>
<dbReference type="InterPro" id="IPR025944">
    <property type="entry name" value="Sigma_54_int_dom_CS"/>
</dbReference>
<dbReference type="NCBIfam" id="TIGR01817">
    <property type="entry name" value="nifA"/>
    <property type="match status" value="1"/>
</dbReference>
<dbReference type="PANTHER" id="PTHR32071:SF117">
    <property type="entry name" value="PTS-DEPENDENT DIHYDROXYACETONE KINASE OPERON REGULATORY PROTEIN-RELATED"/>
    <property type="match status" value="1"/>
</dbReference>
<dbReference type="PANTHER" id="PTHR32071">
    <property type="entry name" value="TRANSCRIPTIONAL REGULATORY PROTEIN"/>
    <property type="match status" value="1"/>
</dbReference>
<dbReference type="Pfam" id="PF01590">
    <property type="entry name" value="GAF"/>
    <property type="match status" value="1"/>
</dbReference>
<dbReference type="Pfam" id="PF02954">
    <property type="entry name" value="HTH_8"/>
    <property type="match status" value="1"/>
</dbReference>
<dbReference type="Pfam" id="PF00158">
    <property type="entry name" value="Sigma54_activat"/>
    <property type="match status" value="1"/>
</dbReference>
<dbReference type="PRINTS" id="PR01590">
    <property type="entry name" value="HTHFIS"/>
</dbReference>
<dbReference type="SMART" id="SM00382">
    <property type="entry name" value="AAA"/>
    <property type="match status" value="1"/>
</dbReference>
<dbReference type="SMART" id="SM00065">
    <property type="entry name" value="GAF"/>
    <property type="match status" value="1"/>
</dbReference>
<dbReference type="SUPFAM" id="SSF55781">
    <property type="entry name" value="GAF domain-like"/>
    <property type="match status" value="1"/>
</dbReference>
<dbReference type="SUPFAM" id="SSF46689">
    <property type="entry name" value="Homeodomain-like"/>
    <property type="match status" value="1"/>
</dbReference>
<dbReference type="SUPFAM" id="SSF52540">
    <property type="entry name" value="P-loop containing nucleoside triphosphate hydrolases"/>
    <property type="match status" value="1"/>
</dbReference>
<dbReference type="PROSITE" id="PS00675">
    <property type="entry name" value="SIGMA54_INTERACT_1"/>
    <property type="match status" value="1"/>
</dbReference>
<dbReference type="PROSITE" id="PS00676">
    <property type="entry name" value="SIGMA54_INTERACT_2"/>
    <property type="match status" value="1"/>
</dbReference>
<dbReference type="PROSITE" id="PS00688">
    <property type="entry name" value="SIGMA54_INTERACT_3"/>
    <property type="match status" value="1"/>
</dbReference>
<dbReference type="PROSITE" id="PS50045">
    <property type="entry name" value="SIGMA54_INTERACT_4"/>
    <property type="match status" value="1"/>
</dbReference>
<reference key="1">
    <citation type="journal article" date="1986" name="Mol. Gen. Genet.">
        <title>Nucleotide sequence of the nifLA operon of Klebsiella oxytoca NG13 and characterization of the gene products.</title>
        <authorList>
            <person name="Kim Y.-M."/>
            <person name="Ahn K.-J."/>
            <person name="Beppu T."/>
            <person name="Uozumi T."/>
        </authorList>
    </citation>
    <scope>NUCLEOTIDE SEQUENCE [GENOMIC DNA]</scope>
    <source>
        <strain>NG13</strain>
    </source>
</reference>
<evidence type="ECO:0000250" key="1"/>
<evidence type="ECO:0000255" key="2">
    <source>
        <dbReference type="PROSITE-ProRule" id="PRU00193"/>
    </source>
</evidence>
<gene>
    <name type="primary">nifA</name>
</gene>
<organism>
    <name type="scientific">Klebsiella oxytoca</name>
    <dbReference type="NCBI Taxonomy" id="571"/>
    <lineage>
        <taxon>Bacteria</taxon>
        <taxon>Pseudomonadati</taxon>
        <taxon>Pseudomonadota</taxon>
        <taxon>Gammaproteobacteria</taxon>
        <taxon>Enterobacterales</taxon>
        <taxon>Enterobacteriaceae</taxon>
        <taxon>Klebsiella/Raoultella group</taxon>
        <taxon>Klebsiella</taxon>
    </lineage>
</organism>
<keyword id="KW-0010">Activator</keyword>
<keyword id="KW-0067">ATP-binding</keyword>
<keyword id="KW-0238">DNA-binding</keyword>
<keyword id="KW-0535">Nitrogen fixation</keyword>
<keyword id="KW-0547">Nucleotide-binding</keyword>
<keyword id="KW-0804">Transcription</keyword>
<keyword id="KW-0805">Transcription regulation</keyword>
<keyword id="KW-0902">Two-component regulatory system</keyword>